<proteinExistence type="inferred from homology"/>
<feature type="chain" id="PRO_0000370439" description="Ribosome biogenesis protein ERB1">
    <location>
        <begin position="1"/>
        <end position="809"/>
    </location>
</feature>
<feature type="repeat" description="WD 1">
    <location>
        <begin position="435"/>
        <end position="474"/>
    </location>
</feature>
<feature type="repeat" description="WD 2">
    <location>
        <begin position="483"/>
        <end position="523"/>
    </location>
</feature>
<feature type="repeat" description="WD 3">
    <location>
        <begin position="593"/>
        <end position="635"/>
    </location>
</feature>
<feature type="repeat" description="WD 4">
    <location>
        <begin position="638"/>
        <end position="676"/>
    </location>
</feature>
<feature type="repeat" description="WD 5">
    <location>
        <begin position="679"/>
        <end position="718"/>
    </location>
</feature>
<feature type="repeat" description="WD 6">
    <location>
        <begin position="722"/>
        <end position="762"/>
    </location>
</feature>
<feature type="repeat" description="WD 7">
    <location>
        <begin position="778"/>
        <end position="809"/>
    </location>
</feature>
<feature type="region of interest" description="Disordered" evidence="3">
    <location>
        <begin position="1"/>
        <end position="107"/>
    </location>
</feature>
<feature type="region of interest" description="Required for interaction with NOP7" evidence="1">
    <location>
        <begin position="267"/>
        <end position="383"/>
    </location>
</feature>
<feature type="region of interest" description="Required for interaction with YTM1" evidence="1">
    <location>
        <begin position="383"/>
        <end position="419"/>
    </location>
</feature>
<feature type="region of interest" description="Disordered" evidence="3">
    <location>
        <begin position="545"/>
        <end position="569"/>
    </location>
</feature>
<feature type="compositionally biased region" description="Acidic residues" evidence="3">
    <location>
        <begin position="30"/>
        <end position="70"/>
    </location>
</feature>
<feature type="compositionally biased region" description="Acidic residues" evidence="3">
    <location>
        <begin position="77"/>
        <end position="97"/>
    </location>
</feature>
<feature type="compositionally biased region" description="Acidic residues" evidence="3">
    <location>
        <begin position="553"/>
        <end position="563"/>
    </location>
</feature>
<protein>
    <recommendedName>
        <fullName evidence="2">Ribosome biogenesis protein ERB1</fullName>
    </recommendedName>
    <alternativeName>
        <fullName evidence="2">Eukaryotic ribosome biogenesis protein 1</fullName>
    </alternativeName>
</protein>
<gene>
    <name evidence="2" type="primary">ERB1</name>
    <name type="ORF">PICST_32792</name>
</gene>
<evidence type="ECO:0000250" key="1"/>
<evidence type="ECO:0000255" key="2">
    <source>
        <dbReference type="HAMAP-Rule" id="MF_03027"/>
    </source>
</evidence>
<evidence type="ECO:0000256" key="3">
    <source>
        <dbReference type="SAM" id="MobiDB-lite"/>
    </source>
</evidence>
<evidence type="ECO:0000305" key="4"/>
<keyword id="KW-0539">Nucleus</keyword>
<keyword id="KW-1185">Reference proteome</keyword>
<keyword id="KW-0677">Repeat</keyword>
<keyword id="KW-0690">Ribosome biogenesis</keyword>
<keyword id="KW-0698">rRNA processing</keyword>
<keyword id="KW-0853">WD repeat</keyword>
<name>ERB1_PICST</name>
<accession>A3LXF0</accession>
<reference key="1">
    <citation type="journal article" date="2007" name="Nat. Biotechnol.">
        <title>Genome sequence of the lignocellulose-bioconverting and xylose-fermenting yeast Pichia stipitis.</title>
        <authorList>
            <person name="Jeffries T.W."/>
            <person name="Grigoriev I.V."/>
            <person name="Grimwood J."/>
            <person name="Laplaza J.M."/>
            <person name="Aerts A."/>
            <person name="Salamov A."/>
            <person name="Schmutz J."/>
            <person name="Lindquist E."/>
            <person name="Dehal P."/>
            <person name="Shapiro H."/>
            <person name="Jin Y.-S."/>
            <person name="Passoth V."/>
            <person name="Richardson P.M."/>
        </authorList>
    </citation>
    <scope>NUCLEOTIDE SEQUENCE [LARGE SCALE GENOMIC DNA]</scope>
    <source>
        <strain>ATCC 58785 / CBS 6054 / NBRC 10063 / NRRL Y-11545</strain>
    </source>
</reference>
<comment type="function">
    <text evidence="2">Component of the NOP7 complex, which is required for maturation of the 25S and 5.8S ribosomal RNAs and formation of the 60S ribosome.</text>
</comment>
<comment type="subunit">
    <text evidence="2">Component of the NOP7 complex, composed of ERB1, NOP7 and YTM1. The complex is held together by ERB1, which interacts with NOP7 via its N-terminal domain and with YTM1 via a high-affinity interaction between the seven-bladed beta-propeller domains of the 2 proteins. The NOP7 complex associates with the 66S pre-ribosome.</text>
</comment>
<comment type="subcellular location">
    <subcellularLocation>
        <location evidence="2">Nucleus</location>
        <location evidence="2">Nucleolus</location>
    </subcellularLocation>
    <subcellularLocation>
        <location evidence="2">Nucleus</location>
        <location evidence="2">Nucleoplasm</location>
    </subcellularLocation>
</comment>
<comment type="similarity">
    <text evidence="2">Belongs to the WD repeat BOP1/ERB1 family.</text>
</comment>
<comment type="sequence caution" evidence="4">
    <conflict type="erroneous initiation">
        <sequence resource="EMBL-CDS" id="ABN67445"/>
    </conflict>
</comment>
<sequence length="809" mass="92228">MSKSSKVGMTDVSVPKSAVLKKRNQREVEAEVDESSEEEFEMDGLLDAEASEDDEEDEENSEDDEEEDSDKELNELLGEEEDPSDYDSENFSDEPQESDTRSITDAISGVKIRSLSDISSQDKQEFHTKYSDGSERIIKPEIEPVYDSDDSDAENFNTIGDIPLSAYDEMPHLGYDINGKRIMRPAKGSALDQLLESIDLPQGWTGLLDQNTGSSLNLTDEELELIRKIQQQENTDANIDPYEATIEWFTSKVEVMPLTAVPEPKRRFVPSKHEAKRVMKIVRAIREGRIIPPSKVKEQIEEERLNYDLWNDDDIAVEDHIMNLRAPKLPPPTNEESYNPPEEYLLTEEEKKQWESLDPADRERNFLPQKFGALRKVPGYQESVRERFERCLDLYLAPRVRHNKLNIDPESLIPELPSPKDLRPFPIRCSTVYQGHTDKIRTISIDPQGLWLATGSDDGSVRIWEILTGRQVFNVQLINKEINDEDHIESLEWNPDSQTGILAVCAGENIYLVVPPIFGFDIENMGRLRIESGWGYDTFGNKTKEEKFKNDEGNEDEDDEDDSATSTAVKKDVARWFPPNQEQTKLGISAIIQCRKTVKKVSWHRKGDYFVTVSPDSKNTAVLIHQLSKHLSQSPFKKSKGIIMDAKFHPFKPQLFVASQRQVRIYDLAQQVLVKKLMPGVRLLSTIDIHPRGDNLLASSYDKRVLWHDLDLSATPYKTLRYHEKAVRSIKFHKGNLPLFASASDDGNIHIFHGTVYDDLMTNPLLVPLKKLTGHKIVNSIGILDLIWHPKEAWLFSAGADGTARLWTT</sequence>
<dbReference type="EMBL" id="CP000500">
    <property type="protein sequence ID" value="ABN67445.2"/>
    <property type="status" value="ALT_INIT"/>
    <property type="molecule type" value="Genomic_DNA"/>
</dbReference>
<dbReference type="RefSeq" id="XP_001385474.2">
    <property type="nucleotide sequence ID" value="XM_001385437.1"/>
</dbReference>
<dbReference type="SMR" id="A3LXF0"/>
<dbReference type="FunCoup" id="A3LXF0">
    <property type="interactions" value="1088"/>
</dbReference>
<dbReference type="STRING" id="322104.A3LXF0"/>
<dbReference type="GeneID" id="4840028"/>
<dbReference type="KEGG" id="pic:PICST_32792"/>
<dbReference type="eggNOG" id="KOG0650">
    <property type="taxonomic scope" value="Eukaryota"/>
</dbReference>
<dbReference type="HOGENOM" id="CLU_011390_0_1_1"/>
<dbReference type="InParanoid" id="A3LXF0"/>
<dbReference type="OrthoDB" id="5571054at2759"/>
<dbReference type="Proteomes" id="UP000002258">
    <property type="component" value="Chromosome 6"/>
</dbReference>
<dbReference type="GO" id="GO:0005654">
    <property type="term" value="C:nucleoplasm"/>
    <property type="evidence" value="ECO:0007669"/>
    <property type="project" value="UniProtKB-SubCell"/>
</dbReference>
<dbReference type="GO" id="GO:0070545">
    <property type="term" value="C:PeBoW complex"/>
    <property type="evidence" value="ECO:0007669"/>
    <property type="project" value="TreeGrafter"/>
</dbReference>
<dbReference type="GO" id="GO:0030687">
    <property type="term" value="C:preribosome, large subunit precursor"/>
    <property type="evidence" value="ECO:0007669"/>
    <property type="project" value="UniProtKB-UniRule"/>
</dbReference>
<dbReference type="GO" id="GO:0043021">
    <property type="term" value="F:ribonucleoprotein complex binding"/>
    <property type="evidence" value="ECO:0007669"/>
    <property type="project" value="UniProtKB-UniRule"/>
</dbReference>
<dbReference type="GO" id="GO:0000466">
    <property type="term" value="P:maturation of 5.8S rRNA from tricistronic rRNA transcript (SSU-rRNA, 5.8S rRNA, LSU-rRNA)"/>
    <property type="evidence" value="ECO:0007669"/>
    <property type="project" value="UniProtKB-UniRule"/>
</dbReference>
<dbReference type="GO" id="GO:0000463">
    <property type="term" value="P:maturation of LSU-rRNA from tricistronic rRNA transcript (SSU-rRNA, 5.8S rRNA, LSU-rRNA)"/>
    <property type="evidence" value="ECO:0007669"/>
    <property type="project" value="UniProtKB-UniRule"/>
</dbReference>
<dbReference type="FunFam" id="2.130.10.10:FF:000061">
    <property type="entry name" value="Ribosome biogenesis protein BOP1 homolog"/>
    <property type="match status" value="1"/>
</dbReference>
<dbReference type="Gene3D" id="2.130.10.10">
    <property type="entry name" value="YVTN repeat-like/Quinoprotein amine dehydrogenase"/>
    <property type="match status" value="1"/>
</dbReference>
<dbReference type="HAMAP" id="MF_03027">
    <property type="entry name" value="BOP1"/>
    <property type="match status" value="1"/>
</dbReference>
<dbReference type="InterPro" id="IPR028598">
    <property type="entry name" value="BOP1/Erb1"/>
</dbReference>
<dbReference type="InterPro" id="IPR012953">
    <property type="entry name" value="BOP1_N_dom"/>
</dbReference>
<dbReference type="InterPro" id="IPR015943">
    <property type="entry name" value="WD40/YVTN_repeat-like_dom_sf"/>
</dbReference>
<dbReference type="InterPro" id="IPR019775">
    <property type="entry name" value="WD40_repeat_CS"/>
</dbReference>
<dbReference type="InterPro" id="IPR036322">
    <property type="entry name" value="WD40_repeat_dom_sf"/>
</dbReference>
<dbReference type="InterPro" id="IPR001680">
    <property type="entry name" value="WD40_rpt"/>
</dbReference>
<dbReference type="PANTHER" id="PTHR17605:SF0">
    <property type="entry name" value="RIBOSOME BIOGENESIS PROTEIN BOP1"/>
    <property type="match status" value="1"/>
</dbReference>
<dbReference type="PANTHER" id="PTHR17605">
    <property type="entry name" value="RIBOSOME BIOGENESIS PROTEIN BOP1 BLOCK OF PROLIFERATION 1 PROTEIN"/>
    <property type="match status" value="1"/>
</dbReference>
<dbReference type="Pfam" id="PF08145">
    <property type="entry name" value="BOP1NT"/>
    <property type="match status" value="1"/>
</dbReference>
<dbReference type="Pfam" id="PF00400">
    <property type="entry name" value="WD40"/>
    <property type="match status" value="3"/>
</dbReference>
<dbReference type="SMART" id="SM01035">
    <property type="entry name" value="BOP1NT"/>
    <property type="match status" value="1"/>
</dbReference>
<dbReference type="SMART" id="SM00320">
    <property type="entry name" value="WD40"/>
    <property type="match status" value="6"/>
</dbReference>
<dbReference type="SUPFAM" id="SSF50978">
    <property type="entry name" value="WD40 repeat-like"/>
    <property type="match status" value="1"/>
</dbReference>
<dbReference type="PROSITE" id="PS00678">
    <property type="entry name" value="WD_REPEATS_1"/>
    <property type="match status" value="1"/>
</dbReference>
<dbReference type="PROSITE" id="PS50082">
    <property type="entry name" value="WD_REPEATS_2"/>
    <property type="match status" value="2"/>
</dbReference>
<dbReference type="PROSITE" id="PS50294">
    <property type="entry name" value="WD_REPEATS_REGION"/>
    <property type="match status" value="2"/>
</dbReference>
<organism>
    <name type="scientific">Scheffersomyces stipitis (strain ATCC 58785 / CBS 6054 / NBRC 10063 / NRRL Y-11545)</name>
    <name type="common">Yeast</name>
    <name type="synonym">Pichia stipitis</name>
    <dbReference type="NCBI Taxonomy" id="322104"/>
    <lineage>
        <taxon>Eukaryota</taxon>
        <taxon>Fungi</taxon>
        <taxon>Dikarya</taxon>
        <taxon>Ascomycota</taxon>
        <taxon>Saccharomycotina</taxon>
        <taxon>Pichiomycetes</taxon>
        <taxon>Debaryomycetaceae</taxon>
        <taxon>Scheffersomyces</taxon>
    </lineage>
</organism>